<feature type="chain" id="PRO_1000081779" description="Small ribosomal subunit protein uS19">
    <location>
        <begin position="1"/>
        <end position="93"/>
    </location>
</feature>
<gene>
    <name evidence="1" type="primary">rpsS</name>
    <name type="ordered locus">Mflv_5045</name>
</gene>
<comment type="function">
    <text evidence="1">Protein S19 forms a complex with S13 that binds strongly to the 16S ribosomal RNA.</text>
</comment>
<comment type="similarity">
    <text evidence="1">Belongs to the universal ribosomal protein uS19 family.</text>
</comment>
<protein>
    <recommendedName>
        <fullName evidence="1">Small ribosomal subunit protein uS19</fullName>
    </recommendedName>
    <alternativeName>
        <fullName evidence="2">30S ribosomal protein S19</fullName>
    </alternativeName>
</protein>
<evidence type="ECO:0000255" key="1">
    <source>
        <dbReference type="HAMAP-Rule" id="MF_00531"/>
    </source>
</evidence>
<evidence type="ECO:0000305" key="2"/>
<name>RS19_MYCGI</name>
<proteinExistence type="inferred from homology"/>
<accession>A4TEC0</accession>
<dbReference type="EMBL" id="CP000656">
    <property type="protein sequence ID" value="ABP47511.1"/>
    <property type="molecule type" value="Genomic_DNA"/>
</dbReference>
<dbReference type="SMR" id="A4TEC0"/>
<dbReference type="STRING" id="350054.Mflv_5045"/>
<dbReference type="KEGG" id="mgi:Mflv_5045"/>
<dbReference type="eggNOG" id="COG0185">
    <property type="taxonomic scope" value="Bacteria"/>
</dbReference>
<dbReference type="HOGENOM" id="CLU_144911_0_1_11"/>
<dbReference type="OrthoDB" id="9797833at2"/>
<dbReference type="GO" id="GO:0005737">
    <property type="term" value="C:cytoplasm"/>
    <property type="evidence" value="ECO:0007669"/>
    <property type="project" value="UniProtKB-ARBA"/>
</dbReference>
<dbReference type="GO" id="GO:0015935">
    <property type="term" value="C:small ribosomal subunit"/>
    <property type="evidence" value="ECO:0007669"/>
    <property type="project" value="InterPro"/>
</dbReference>
<dbReference type="GO" id="GO:0019843">
    <property type="term" value="F:rRNA binding"/>
    <property type="evidence" value="ECO:0007669"/>
    <property type="project" value="UniProtKB-UniRule"/>
</dbReference>
<dbReference type="GO" id="GO:0003735">
    <property type="term" value="F:structural constituent of ribosome"/>
    <property type="evidence" value="ECO:0007669"/>
    <property type="project" value="InterPro"/>
</dbReference>
<dbReference type="GO" id="GO:0000028">
    <property type="term" value="P:ribosomal small subunit assembly"/>
    <property type="evidence" value="ECO:0007669"/>
    <property type="project" value="TreeGrafter"/>
</dbReference>
<dbReference type="GO" id="GO:0006412">
    <property type="term" value="P:translation"/>
    <property type="evidence" value="ECO:0007669"/>
    <property type="project" value="UniProtKB-UniRule"/>
</dbReference>
<dbReference type="FunFam" id="3.30.860.10:FF:000001">
    <property type="entry name" value="30S ribosomal protein S19"/>
    <property type="match status" value="1"/>
</dbReference>
<dbReference type="Gene3D" id="3.30.860.10">
    <property type="entry name" value="30s Ribosomal Protein S19, Chain A"/>
    <property type="match status" value="1"/>
</dbReference>
<dbReference type="HAMAP" id="MF_00531">
    <property type="entry name" value="Ribosomal_uS19"/>
    <property type="match status" value="1"/>
</dbReference>
<dbReference type="InterPro" id="IPR002222">
    <property type="entry name" value="Ribosomal_uS19"/>
</dbReference>
<dbReference type="InterPro" id="IPR005732">
    <property type="entry name" value="Ribosomal_uS19_bac-type"/>
</dbReference>
<dbReference type="InterPro" id="IPR020934">
    <property type="entry name" value="Ribosomal_uS19_CS"/>
</dbReference>
<dbReference type="InterPro" id="IPR023575">
    <property type="entry name" value="Ribosomal_uS19_SF"/>
</dbReference>
<dbReference type="NCBIfam" id="TIGR01050">
    <property type="entry name" value="rpsS_bact"/>
    <property type="match status" value="1"/>
</dbReference>
<dbReference type="PANTHER" id="PTHR11880">
    <property type="entry name" value="RIBOSOMAL PROTEIN S19P FAMILY MEMBER"/>
    <property type="match status" value="1"/>
</dbReference>
<dbReference type="PANTHER" id="PTHR11880:SF8">
    <property type="entry name" value="SMALL RIBOSOMAL SUBUNIT PROTEIN US19M"/>
    <property type="match status" value="1"/>
</dbReference>
<dbReference type="Pfam" id="PF00203">
    <property type="entry name" value="Ribosomal_S19"/>
    <property type="match status" value="1"/>
</dbReference>
<dbReference type="PIRSF" id="PIRSF002144">
    <property type="entry name" value="Ribosomal_S19"/>
    <property type="match status" value="1"/>
</dbReference>
<dbReference type="PRINTS" id="PR00975">
    <property type="entry name" value="RIBOSOMALS19"/>
</dbReference>
<dbReference type="SUPFAM" id="SSF54570">
    <property type="entry name" value="Ribosomal protein S19"/>
    <property type="match status" value="1"/>
</dbReference>
<dbReference type="PROSITE" id="PS00323">
    <property type="entry name" value="RIBOSOMAL_S19"/>
    <property type="match status" value="1"/>
</dbReference>
<reference key="1">
    <citation type="submission" date="2007-04" db="EMBL/GenBank/DDBJ databases">
        <title>Complete sequence of chromosome of Mycobacterium gilvum PYR-GCK.</title>
        <authorList>
            <consortium name="US DOE Joint Genome Institute"/>
            <person name="Copeland A."/>
            <person name="Lucas S."/>
            <person name="Lapidus A."/>
            <person name="Barry K."/>
            <person name="Detter J.C."/>
            <person name="Glavina del Rio T."/>
            <person name="Hammon N."/>
            <person name="Israni S."/>
            <person name="Dalin E."/>
            <person name="Tice H."/>
            <person name="Pitluck S."/>
            <person name="Chain P."/>
            <person name="Malfatti S."/>
            <person name="Shin M."/>
            <person name="Vergez L."/>
            <person name="Schmutz J."/>
            <person name="Larimer F."/>
            <person name="Land M."/>
            <person name="Hauser L."/>
            <person name="Kyrpides N."/>
            <person name="Mikhailova N."/>
            <person name="Miller C."/>
            <person name="Richardson P."/>
        </authorList>
    </citation>
    <scope>NUCLEOTIDE SEQUENCE [LARGE SCALE GENOMIC DNA]</scope>
    <source>
        <strain>PYR-GCK</strain>
    </source>
</reference>
<organism>
    <name type="scientific">Mycolicibacterium gilvum (strain PYR-GCK)</name>
    <name type="common">Mycobacterium gilvum (strain PYR-GCK)</name>
    <dbReference type="NCBI Taxonomy" id="350054"/>
    <lineage>
        <taxon>Bacteria</taxon>
        <taxon>Bacillati</taxon>
        <taxon>Actinomycetota</taxon>
        <taxon>Actinomycetes</taxon>
        <taxon>Mycobacteriales</taxon>
        <taxon>Mycobacteriaceae</taxon>
        <taxon>Mycolicibacterium</taxon>
    </lineage>
</organism>
<sequence>MPRSLKKGPFVDDHLLKKVDVQNEKNTKQVIKTWSRRSTIIPDFIGHTFAVHDGRKHVPVFVTEAMVGHKLGEFAPTRTFKGHIKDDRKAKRR</sequence>
<keyword id="KW-0687">Ribonucleoprotein</keyword>
<keyword id="KW-0689">Ribosomal protein</keyword>
<keyword id="KW-0694">RNA-binding</keyword>
<keyword id="KW-0699">rRNA-binding</keyword>